<feature type="chain" id="PRO_0000081390" description="Regulator of RpoS">
    <location>
        <begin position="1"/>
        <end position="337"/>
    </location>
</feature>
<feature type="domain" description="Response regulatory" evidence="2">
    <location>
        <begin position="9"/>
        <end position="123"/>
    </location>
</feature>
<feature type="modified residue" description="4-aspartylphosphate" evidence="1">
    <location>
        <position position="58"/>
    </location>
</feature>
<protein>
    <recommendedName>
        <fullName evidence="1">Regulator of RpoS</fullName>
    </recommendedName>
</protein>
<name>RSSB_SHIFL</name>
<dbReference type="EMBL" id="AE005674">
    <property type="protein sequence ID" value="AAN42848.1"/>
    <property type="molecule type" value="Genomic_DNA"/>
</dbReference>
<dbReference type="EMBL" id="AE014073">
    <property type="protein sequence ID" value="AAP16733.1"/>
    <property type="molecule type" value="Genomic_DNA"/>
</dbReference>
<dbReference type="RefSeq" id="NP_707141.1">
    <property type="nucleotide sequence ID" value="NC_004337.2"/>
</dbReference>
<dbReference type="RefSeq" id="WP_000193447.1">
    <property type="nucleotide sequence ID" value="NZ_WPGW01000029.1"/>
</dbReference>
<dbReference type="SMR" id="P0AEV3"/>
<dbReference type="STRING" id="198214.SF1235"/>
<dbReference type="PaxDb" id="198214-SF1235"/>
<dbReference type="GeneID" id="1024217"/>
<dbReference type="GeneID" id="93775301"/>
<dbReference type="KEGG" id="sfl:SF1235"/>
<dbReference type="KEGG" id="sfx:S1321"/>
<dbReference type="PATRIC" id="fig|198214.7.peg.1453"/>
<dbReference type="HOGENOM" id="CLU_055989_1_0_6"/>
<dbReference type="Proteomes" id="UP000001006">
    <property type="component" value="Chromosome"/>
</dbReference>
<dbReference type="Proteomes" id="UP000002673">
    <property type="component" value="Chromosome"/>
</dbReference>
<dbReference type="GO" id="GO:0000160">
    <property type="term" value="P:phosphorelay signal transduction system"/>
    <property type="evidence" value="ECO:0007669"/>
    <property type="project" value="InterPro"/>
</dbReference>
<dbReference type="GO" id="GO:0045862">
    <property type="term" value="P:positive regulation of proteolysis"/>
    <property type="evidence" value="ECO:0007669"/>
    <property type="project" value="UniProtKB-UniRule"/>
</dbReference>
<dbReference type="GO" id="GO:0010468">
    <property type="term" value="P:regulation of gene expression"/>
    <property type="evidence" value="ECO:0007669"/>
    <property type="project" value="UniProtKB-UniRule"/>
</dbReference>
<dbReference type="CDD" id="cd00156">
    <property type="entry name" value="REC"/>
    <property type="match status" value="1"/>
</dbReference>
<dbReference type="FunFam" id="3.40.50.2300:FF:000076">
    <property type="entry name" value="Regulator of RpoS"/>
    <property type="match status" value="1"/>
</dbReference>
<dbReference type="FunFam" id="3.60.40.10:FF:000012">
    <property type="entry name" value="Regulator of RpoS"/>
    <property type="match status" value="1"/>
</dbReference>
<dbReference type="Gene3D" id="3.40.50.2300">
    <property type="match status" value="1"/>
</dbReference>
<dbReference type="Gene3D" id="3.60.40.10">
    <property type="entry name" value="PPM-type phosphatase domain"/>
    <property type="match status" value="1"/>
</dbReference>
<dbReference type="HAMAP" id="MF_00958">
    <property type="entry name" value="RssB"/>
    <property type="match status" value="1"/>
</dbReference>
<dbReference type="InterPro" id="IPR050595">
    <property type="entry name" value="Bact_response_regulator"/>
</dbReference>
<dbReference type="InterPro" id="IPR011006">
    <property type="entry name" value="CheY-like_superfamily"/>
</dbReference>
<dbReference type="InterPro" id="IPR036457">
    <property type="entry name" value="PPM-type-like_dom_sf"/>
</dbReference>
<dbReference type="InterPro" id="IPR028616">
    <property type="entry name" value="RssB"/>
</dbReference>
<dbReference type="InterPro" id="IPR001789">
    <property type="entry name" value="Sig_transdc_resp-reg_receiver"/>
</dbReference>
<dbReference type="NCBIfam" id="NF007969">
    <property type="entry name" value="PRK10693.1"/>
    <property type="match status" value="1"/>
</dbReference>
<dbReference type="PANTHER" id="PTHR44591:SF23">
    <property type="entry name" value="CHEY SUBFAMILY"/>
    <property type="match status" value="1"/>
</dbReference>
<dbReference type="PANTHER" id="PTHR44591">
    <property type="entry name" value="STRESS RESPONSE REGULATOR PROTEIN 1"/>
    <property type="match status" value="1"/>
</dbReference>
<dbReference type="Pfam" id="PF00072">
    <property type="entry name" value="Response_reg"/>
    <property type="match status" value="1"/>
</dbReference>
<dbReference type="SMART" id="SM00448">
    <property type="entry name" value="REC"/>
    <property type="match status" value="1"/>
</dbReference>
<dbReference type="SUPFAM" id="SSF52172">
    <property type="entry name" value="CheY-like"/>
    <property type="match status" value="1"/>
</dbReference>
<dbReference type="PROSITE" id="PS50110">
    <property type="entry name" value="RESPONSE_REGULATORY"/>
    <property type="match status" value="1"/>
</dbReference>
<keyword id="KW-0597">Phosphoprotein</keyword>
<keyword id="KW-1185">Reference proteome</keyword>
<keyword id="KW-0346">Stress response</keyword>
<evidence type="ECO:0000255" key="1">
    <source>
        <dbReference type="HAMAP-Rule" id="MF_00958"/>
    </source>
</evidence>
<evidence type="ECO:0000255" key="2">
    <source>
        <dbReference type="PROSITE-ProRule" id="PRU00169"/>
    </source>
</evidence>
<reference key="1">
    <citation type="journal article" date="2002" name="Nucleic Acids Res.">
        <title>Genome sequence of Shigella flexneri 2a: insights into pathogenicity through comparison with genomes of Escherichia coli K12 and O157.</title>
        <authorList>
            <person name="Jin Q."/>
            <person name="Yuan Z."/>
            <person name="Xu J."/>
            <person name="Wang Y."/>
            <person name="Shen Y."/>
            <person name="Lu W."/>
            <person name="Wang J."/>
            <person name="Liu H."/>
            <person name="Yang J."/>
            <person name="Yang F."/>
            <person name="Zhang X."/>
            <person name="Zhang J."/>
            <person name="Yang G."/>
            <person name="Wu H."/>
            <person name="Qu D."/>
            <person name="Dong J."/>
            <person name="Sun L."/>
            <person name="Xue Y."/>
            <person name="Zhao A."/>
            <person name="Gao Y."/>
            <person name="Zhu J."/>
            <person name="Kan B."/>
            <person name="Ding K."/>
            <person name="Chen S."/>
            <person name="Cheng H."/>
            <person name="Yao Z."/>
            <person name="He B."/>
            <person name="Chen R."/>
            <person name="Ma D."/>
            <person name="Qiang B."/>
            <person name="Wen Y."/>
            <person name="Hou Y."/>
            <person name="Yu J."/>
        </authorList>
    </citation>
    <scope>NUCLEOTIDE SEQUENCE [LARGE SCALE GENOMIC DNA]</scope>
    <source>
        <strain>301 / Serotype 2a</strain>
    </source>
</reference>
<reference key="2">
    <citation type="journal article" date="2003" name="Infect. Immun.">
        <title>Complete genome sequence and comparative genomics of Shigella flexneri serotype 2a strain 2457T.</title>
        <authorList>
            <person name="Wei J."/>
            <person name="Goldberg M.B."/>
            <person name="Burland V."/>
            <person name="Venkatesan M.M."/>
            <person name="Deng W."/>
            <person name="Fournier G."/>
            <person name="Mayhew G.F."/>
            <person name="Plunkett G. III"/>
            <person name="Rose D.J."/>
            <person name="Darling A."/>
            <person name="Mau B."/>
            <person name="Perna N.T."/>
            <person name="Payne S.M."/>
            <person name="Runyen-Janecky L.J."/>
            <person name="Zhou S."/>
            <person name="Schwartz D.C."/>
            <person name="Blattner F.R."/>
        </authorList>
    </citation>
    <scope>NUCLEOTIDE SEQUENCE [LARGE SCALE GENOMIC DNA]</scope>
    <source>
        <strain>ATCC 700930 / 2457T / Serotype 2a</strain>
    </source>
</reference>
<sequence length="337" mass="37302">MTQPLVGKQILIVEDEQVFRSLLDSWFSSLGATTVLAADGVDALELLGGFTPDLMICDIAMPRMNGLKLLEHIRNRGDQTPVLVISATENMADIAKALRLGVEDVLLKPVKDLNRLREMVFACLYPSMFNSRVEEEERLFRDWDAMVDNPAAAAKLLQELQPPVQQVISHCRVNYRQLVAADKPGLVLDIAALSENDLAFYCLDVTRAGHNGVLAALLLRALFNGLLQEQLAHQNQRLPELGALLKQVNHLLRQANLPGQFPLLVGYYHRELKNLILVSAGLNATLNTGEHQVQISNGVPLGTLGNAYLNQLSQRCDAWQCQIWGTGGRLRLMLSAE</sequence>
<proteinExistence type="inferred from homology"/>
<gene>
    <name evidence="1" type="primary">rssB</name>
    <name type="synonym">hnr</name>
    <name type="ordered locus">SF1235</name>
    <name type="ordered locus">S1321</name>
</gene>
<comment type="function">
    <text evidence="1">Regulates the turnover of the sigma S factor (RpoS) by promoting its proteolysis in exponentially growing cells. Acts by binding and delivering RpoS to the ClpXP protease. RssB is not co-degraded with RpoS, but is released from the complex and can initiate a new cycle of RpoS recognition and degradation.</text>
</comment>
<comment type="subunit">
    <text evidence="1">Binds to RpoS.</text>
</comment>
<comment type="PTM">
    <text evidence="1">Phosphorylated. Phosphorylation stimulates the interaction with RpoS and, therefore, the proteolysis of RpoS.</text>
</comment>
<comment type="similarity">
    <text evidence="1">Belongs to the RssB family.</text>
</comment>
<organism>
    <name type="scientific">Shigella flexneri</name>
    <dbReference type="NCBI Taxonomy" id="623"/>
    <lineage>
        <taxon>Bacteria</taxon>
        <taxon>Pseudomonadati</taxon>
        <taxon>Pseudomonadota</taxon>
        <taxon>Gammaproteobacteria</taxon>
        <taxon>Enterobacterales</taxon>
        <taxon>Enterobacteriaceae</taxon>
        <taxon>Shigella</taxon>
    </lineage>
</organism>
<accession>P0AEV3</accession>
<accession>P37055</accession>